<keyword id="KW-0687">Ribonucleoprotein</keyword>
<keyword id="KW-0689">Ribosomal protein</keyword>
<keyword id="KW-0694">RNA-binding</keyword>
<keyword id="KW-0699">rRNA-binding</keyword>
<comment type="function">
    <text evidence="1">With S4 and S12 plays an important role in translational accuracy.</text>
</comment>
<comment type="function">
    <text evidence="1">Located at the back of the 30S subunit body where it stabilizes the conformation of the head with respect to the body.</text>
</comment>
<comment type="subunit">
    <text evidence="1">Part of the 30S ribosomal subunit. Contacts proteins S4 and S8.</text>
</comment>
<comment type="domain">
    <text>The N-terminal domain interacts with the head of the 30S subunit; the C-terminal domain interacts with the body and contacts protein S4. The interaction surface between S4 and S5 is involved in control of translational fidelity.</text>
</comment>
<comment type="similarity">
    <text evidence="1">Belongs to the universal ribosomal protein uS5 family.</text>
</comment>
<feature type="chain" id="PRO_0000131601" description="Small ribosomal subunit protein uS5">
    <location>
        <begin position="1"/>
        <end position="164"/>
    </location>
</feature>
<feature type="domain" description="S5 DRBM" evidence="1">
    <location>
        <begin position="10"/>
        <end position="73"/>
    </location>
</feature>
<evidence type="ECO:0000255" key="1">
    <source>
        <dbReference type="HAMAP-Rule" id="MF_01307"/>
    </source>
</evidence>
<evidence type="ECO:0000305" key="2"/>
<sequence>MAFKDNAVELEERVVAINRVTKVVKGGRRLRFAALVVVGDRNGRVGFGTGKAQEVPEAIRKAVEAAKKNMVEVPMVGTTIPHEVRSEFGGAKVLLKPAVEGAGVAAGGAVRAVIELAGVADITSKSLGSNTPINIVRATVEGLKQLKRAEEVAALRGISVSDLA</sequence>
<organism>
    <name type="scientific">Streptococcus agalactiae serotype III (strain NEM316)</name>
    <dbReference type="NCBI Taxonomy" id="211110"/>
    <lineage>
        <taxon>Bacteria</taxon>
        <taxon>Bacillati</taxon>
        <taxon>Bacillota</taxon>
        <taxon>Bacilli</taxon>
        <taxon>Lactobacillales</taxon>
        <taxon>Streptococcaceae</taxon>
        <taxon>Streptococcus</taxon>
    </lineage>
</organism>
<proteinExistence type="inferred from homology"/>
<accession>Q8E7S4</accession>
<name>RS5_STRA3</name>
<dbReference type="EMBL" id="AL766843">
    <property type="protein sequence ID" value="CAD45720.1"/>
    <property type="molecule type" value="Genomic_DNA"/>
</dbReference>
<dbReference type="RefSeq" id="WP_000874200.1">
    <property type="nucleotide sequence ID" value="NC_004368.1"/>
</dbReference>
<dbReference type="SMR" id="Q8E7S4"/>
<dbReference type="GeneID" id="66885035"/>
<dbReference type="KEGG" id="san:rpsE"/>
<dbReference type="eggNOG" id="COG0098">
    <property type="taxonomic scope" value="Bacteria"/>
</dbReference>
<dbReference type="HOGENOM" id="CLU_065898_2_2_9"/>
<dbReference type="Proteomes" id="UP000000823">
    <property type="component" value="Chromosome"/>
</dbReference>
<dbReference type="GO" id="GO:0015935">
    <property type="term" value="C:small ribosomal subunit"/>
    <property type="evidence" value="ECO:0007669"/>
    <property type="project" value="InterPro"/>
</dbReference>
<dbReference type="GO" id="GO:0019843">
    <property type="term" value="F:rRNA binding"/>
    <property type="evidence" value="ECO:0007669"/>
    <property type="project" value="UniProtKB-UniRule"/>
</dbReference>
<dbReference type="GO" id="GO:0003735">
    <property type="term" value="F:structural constituent of ribosome"/>
    <property type="evidence" value="ECO:0007669"/>
    <property type="project" value="InterPro"/>
</dbReference>
<dbReference type="GO" id="GO:0006412">
    <property type="term" value="P:translation"/>
    <property type="evidence" value="ECO:0007669"/>
    <property type="project" value="UniProtKB-UniRule"/>
</dbReference>
<dbReference type="FunFam" id="3.30.160.20:FF:000001">
    <property type="entry name" value="30S ribosomal protein S5"/>
    <property type="match status" value="1"/>
</dbReference>
<dbReference type="FunFam" id="3.30.230.10:FF:000002">
    <property type="entry name" value="30S ribosomal protein S5"/>
    <property type="match status" value="1"/>
</dbReference>
<dbReference type="Gene3D" id="3.30.160.20">
    <property type="match status" value="1"/>
</dbReference>
<dbReference type="Gene3D" id="3.30.230.10">
    <property type="match status" value="1"/>
</dbReference>
<dbReference type="HAMAP" id="MF_01307_B">
    <property type="entry name" value="Ribosomal_uS5_B"/>
    <property type="match status" value="1"/>
</dbReference>
<dbReference type="InterPro" id="IPR020568">
    <property type="entry name" value="Ribosomal_Su5_D2-typ_SF"/>
</dbReference>
<dbReference type="InterPro" id="IPR000851">
    <property type="entry name" value="Ribosomal_uS5"/>
</dbReference>
<dbReference type="InterPro" id="IPR005712">
    <property type="entry name" value="Ribosomal_uS5_bac-type"/>
</dbReference>
<dbReference type="InterPro" id="IPR005324">
    <property type="entry name" value="Ribosomal_uS5_C"/>
</dbReference>
<dbReference type="InterPro" id="IPR013810">
    <property type="entry name" value="Ribosomal_uS5_N"/>
</dbReference>
<dbReference type="InterPro" id="IPR018192">
    <property type="entry name" value="Ribosomal_uS5_N_CS"/>
</dbReference>
<dbReference type="InterPro" id="IPR014721">
    <property type="entry name" value="Ribsml_uS5_D2-typ_fold_subgr"/>
</dbReference>
<dbReference type="NCBIfam" id="TIGR01021">
    <property type="entry name" value="rpsE_bact"/>
    <property type="match status" value="1"/>
</dbReference>
<dbReference type="PANTHER" id="PTHR48277">
    <property type="entry name" value="MITOCHONDRIAL RIBOSOMAL PROTEIN S5"/>
    <property type="match status" value="1"/>
</dbReference>
<dbReference type="PANTHER" id="PTHR48277:SF1">
    <property type="entry name" value="MITOCHONDRIAL RIBOSOMAL PROTEIN S5"/>
    <property type="match status" value="1"/>
</dbReference>
<dbReference type="Pfam" id="PF00333">
    <property type="entry name" value="Ribosomal_S5"/>
    <property type="match status" value="1"/>
</dbReference>
<dbReference type="Pfam" id="PF03719">
    <property type="entry name" value="Ribosomal_S5_C"/>
    <property type="match status" value="1"/>
</dbReference>
<dbReference type="SUPFAM" id="SSF54768">
    <property type="entry name" value="dsRNA-binding domain-like"/>
    <property type="match status" value="1"/>
</dbReference>
<dbReference type="SUPFAM" id="SSF54211">
    <property type="entry name" value="Ribosomal protein S5 domain 2-like"/>
    <property type="match status" value="1"/>
</dbReference>
<dbReference type="PROSITE" id="PS00585">
    <property type="entry name" value="RIBOSOMAL_S5"/>
    <property type="match status" value="1"/>
</dbReference>
<dbReference type="PROSITE" id="PS50881">
    <property type="entry name" value="S5_DSRBD"/>
    <property type="match status" value="1"/>
</dbReference>
<reference key="1">
    <citation type="journal article" date="2002" name="Mol. Microbiol.">
        <title>Genome sequence of Streptococcus agalactiae, a pathogen causing invasive neonatal disease.</title>
        <authorList>
            <person name="Glaser P."/>
            <person name="Rusniok C."/>
            <person name="Buchrieser C."/>
            <person name="Chevalier F."/>
            <person name="Frangeul L."/>
            <person name="Msadek T."/>
            <person name="Zouine M."/>
            <person name="Couve E."/>
            <person name="Lalioui L."/>
            <person name="Poyart C."/>
            <person name="Trieu-Cuot P."/>
            <person name="Kunst F."/>
        </authorList>
    </citation>
    <scope>NUCLEOTIDE SEQUENCE [LARGE SCALE GENOMIC DNA]</scope>
    <source>
        <strain>NEM316</strain>
    </source>
</reference>
<protein>
    <recommendedName>
        <fullName evidence="1">Small ribosomal subunit protein uS5</fullName>
    </recommendedName>
    <alternativeName>
        <fullName evidence="2">30S ribosomal protein S5</fullName>
    </alternativeName>
</protein>
<gene>
    <name evidence="1" type="primary">rpsE</name>
    <name type="ordered locus">gbs0075</name>
</gene>